<proteinExistence type="evidence at protein level"/>
<organism>
    <name type="scientific">Homo sapiens</name>
    <name type="common">Human</name>
    <dbReference type="NCBI Taxonomy" id="9606"/>
    <lineage>
        <taxon>Eukaryota</taxon>
        <taxon>Metazoa</taxon>
        <taxon>Chordata</taxon>
        <taxon>Craniata</taxon>
        <taxon>Vertebrata</taxon>
        <taxon>Euteleostomi</taxon>
        <taxon>Mammalia</taxon>
        <taxon>Eutheria</taxon>
        <taxon>Euarchontoglires</taxon>
        <taxon>Primates</taxon>
        <taxon>Haplorrhini</taxon>
        <taxon>Catarrhini</taxon>
        <taxon>Hominidae</taxon>
        <taxon>Homo</taxon>
    </lineage>
</organism>
<comment type="function">
    <text evidence="6 8 10 11 13 15 16 18">Endoplasmic reticulum (ER)-bound sequence-specific transcription factor that directly binds DNA and activates transcription (PubMed:10984507, PubMed:15845366, PubMed:16940180, PubMed:19779205, PubMed:9271389). Plays a role in the unfolded protein response (UPR), promoting cell survival versus ER stress-induced apoptotic cell death (PubMed:15845366, PubMed:16940180). Also involved in cell proliferation, migration and differentiation, tumor suppression and inflammatory gene expression. Acts as a positive regulator of LKN-1/CCL15-induced chemotaxis signaling of leukocyte cell migration (PubMed:15001559, PubMed:17296613, PubMed:19779205). Associates with chromatin to the HERPUD1 promoter (PubMed:16940180). Also induces transcriptional activation of chemokine receptors (PubMed:17296613, PubMed:18587271).</text>
</comment>
<comment type="function">
    <text evidence="12">(Microbial infection) Plays a role in human immunodeficiency virus type 1 (HIV-1) virus protein expression.</text>
</comment>
<comment type="function">
    <molecule>Isoform 1</molecule>
    <text evidence="5">(Microbial infection) May play a role as a cellular tumor suppressor that is targeted by the hepatitis C virus (HCV) core protein.</text>
</comment>
<comment type="function">
    <molecule>Isoform 1</molecule>
    <text evidence="3 9">(Microbial infection) Plays a role in herpes simplex virus-1 (HSV-1) latent infection and reactivation from latency. Represses the VP16-mediated transactivation of immediate early genes of the HSV-1 virus by sequestering host cell factor-1 HCFC1 in the ER membrane of sensory neurons, thereby preventing the initiation of the replicative cascade leading to latent infection.</text>
</comment>
<comment type="function">
    <molecule>Isoform 2</molecule>
    <text evidence="16">Functions as a negative transcriptional regulator in ligand-induced transcriptional activation of the glucocorticoid receptor NR3C1 by recruiting and activating histone deacetylases (HDAC1, HDAC2 and HDAC6). Also decreases the acetylation level of histone H4. Does not promote the chemotactic activity of leukocyte cells.</text>
</comment>
<comment type="function">
    <molecule>Processed cyclic AMP-responsive element-binding protein 3</molecule>
    <text evidence="11">This is the transcriptionally active form that translocates to the nucleus and activates unfolded protein response (UPR) target genes during endoplasmic reticulum (ER) stress response. Binds the cAMP response element (CRE) (consensus: 5'-GTGACGT[AG][AG]-3') and C/EBP sequences present in many promoters to activate transcription of the genes. Binds to the unfolded protein response element (UPRE) consensus sequences sites. Binds DNA to the 5'-CCAC[GA]-3'half of ERSE II (5'-ATTGG-N-CCACG-3').</text>
</comment>
<comment type="function">
    <molecule>Processed cyclic AMP-responsive element-binding protein 3</molecule>
    <text evidence="3">(Microbial infection) Activates transcription of genes required for reactivation of the latent HSV-1 virus. It's transcriptional activity is inhibited by CREBZF in a HCFC1-dependent manner, by the viral transactivator protein VP16. Binds DNA to the cAMP response element (CRE) (consensus: 5'-GTGACGT[AG][AG]-3') and C/EBP sequences present in many viral promoters.</text>
</comment>
<comment type="function">
    <molecule>Processed cyclic AMP-responsive element-binding protein 3</molecule>
    <text evidence="5">(Microbial infection) It's transcriptional activity is inhibited by CREBZF in a HCFC1-dependent manner, by the viral transactivator HCV core protein.</text>
</comment>
<comment type="subunit">
    <text evidence="4 5 6 8 9 14 17 18 19">Homodimer (PubMed:10675342). Isoform 1 interacts with HCFC1; the interaction is required to stimulate CREB3 transcriptional activity (PubMed:10629049, PubMed:10984507, PubMed:9271389, PubMed:9389645). Isoform 1 interacts with CREBZF; the interaction occurs only in combination with HCFC1 (PubMed:15705566). Isoform 1 interacts (via central part and transmembrane region) with DCSTAMP (via C-terminus cytoplasmic domain) (PubMed:20546900). Isoform 1 interacts with OS9 (PubMed:20546900). Isoform 1 interacts (via leucine-zipper domain) with CREBRF (via leucine-zipper domain); the interaction occurs only after CREB3 activation and promotes CREB3 degradation (PubMed:18391022). Isoform 1 interacts (via C-terminal domain) with CCR1 (PubMed:15001559).</text>
</comment>
<comment type="subunit">
    <text evidence="5 12">(Microbial infection) Interacts with the HCV core protein; homodimerization is prevented by the HCV core protein (PubMed:10675342). Isoform 1 interacts (via leucine-zipper and transmembrane domains) with HIV-1 TMgp41 (via cytoplasmic domain); the interaction reduces CREB3 stability (PubMed:17054986). Processed cyclic AMP-responsive element-binding protein 3 interacts with HIV-1 Tat (PubMed:17054986).</text>
</comment>
<comment type="interaction">
    <interactant intactId="EBI-625002">
        <id>O43889</id>
    </interactant>
    <interactant intactId="EBI-2848814">
        <id>Q92685</id>
        <label>ALG3</label>
    </interactant>
    <organismsDiffer>false</organismsDiffer>
    <experiments>4</experiments>
</comment>
<comment type="interaction">
    <interactant intactId="EBI-625002">
        <id>O43889</id>
    </interactant>
    <interactant intactId="EBI-625002">
        <id>O43889</id>
        <label>CREB3</label>
    </interactant>
    <organismsDiffer>false</organismsDiffer>
    <experiments>2</experiments>
</comment>
<comment type="interaction">
    <interactant intactId="EBI-625002">
        <id>O43889</id>
    </interactant>
    <interactant intactId="EBI-852194">
        <id>Q68CJ9</id>
        <label>CREB3L3</label>
    </interactant>
    <organismsDiffer>false</organismsDiffer>
    <experiments>3</experiments>
</comment>
<comment type="interaction">
    <interactant intactId="EBI-625002">
        <id>O43889</id>
    </interactant>
    <interactant intactId="EBI-632965">
        <id>Q9NS37</id>
        <label>CREBZF</label>
    </interactant>
    <organismsDiffer>false</organismsDiffer>
    <experiments>3</experiments>
</comment>
<comment type="interaction">
    <interactant intactId="EBI-625002">
        <id>O43889</id>
    </interactant>
    <interactant intactId="EBI-742651">
        <id>P35638</id>
        <label>DDIT3</label>
    </interactant>
    <organismsDiffer>false</organismsDiffer>
    <experiments>2</experiments>
</comment>
<comment type="interaction">
    <interactant intactId="EBI-625002">
        <id>O43889</id>
    </interactant>
    <interactant intactId="EBI-396176">
        <id>P51610</id>
        <label>HCFC1</label>
    </interactant>
    <organismsDiffer>false</organismsDiffer>
    <experiments>7</experiments>
</comment>
<comment type="interaction">
    <interactant intactId="EBI-625002">
        <id>O43889</id>
    </interactant>
    <interactant intactId="EBI-852823">
        <id>P05412</id>
        <label>JUN</label>
    </interactant>
    <organismsDiffer>false</organismsDiffer>
    <experiments>4</experiments>
</comment>
<comment type="interaction">
    <interactant intactId="EBI-625002">
        <id>O43889</id>
    </interactant>
    <interactant intactId="EBI-1034261">
        <id>O00268</id>
        <label>TAF4</label>
    </interactant>
    <organismsDiffer>false</organismsDiffer>
    <experiments>2</experiments>
</comment>
<comment type="interaction">
    <interactant intactId="EBI-625022">
        <id>O43889-2</id>
    </interactant>
    <interactant intactId="EBI-1646426">
        <id>Q15109</id>
        <label>AGER</label>
    </interactant>
    <organismsDiffer>false</organismsDiffer>
    <experiments>3</experiments>
</comment>
<comment type="interaction">
    <interactant intactId="EBI-625022">
        <id>O43889-2</id>
    </interactant>
    <interactant intactId="EBI-2848814">
        <id>Q92685</id>
        <label>ALG3</label>
    </interactant>
    <organismsDiffer>false</organismsDiffer>
    <experiments>4</experiments>
</comment>
<comment type="interaction">
    <interactant intactId="EBI-625022">
        <id>O43889-2</id>
    </interactant>
    <interactant intactId="EBI-3921603">
        <id>Q9BVK2</id>
        <label>ALG8</label>
    </interactant>
    <organismsDiffer>false</organismsDiffer>
    <experiments>3</experiments>
</comment>
<comment type="interaction">
    <interactant intactId="EBI-625022">
        <id>O43889-2</id>
    </interactant>
    <interactant intactId="EBI-715495">
        <id>P05090</id>
        <label>APOD</label>
    </interactant>
    <organismsDiffer>false</organismsDiffer>
    <experiments>4</experiments>
</comment>
<comment type="interaction">
    <interactant intactId="EBI-625022">
        <id>O43889-2</id>
    </interactant>
    <interactant intactId="EBI-745213">
        <id>P29972</id>
        <label>AQP1</label>
    </interactant>
    <organismsDiffer>false</organismsDiffer>
    <experiments>3</experiments>
</comment>
<comment type="interaction">
    <interactant intactId="EBI-625022">
        <id>O43889-2</id>
    </interactant>
    <interactant intactId="EBI-12701138">
        <id>P41181</id>
        <label>AQP2</label>
    </interactant>
    <organismsDiffer>false</organismsDiffer>
    <experiments>3</experiments>
</comment>
<comment type="interaction">
    <interactant intactId="EBI-625022">
        <id>O43889-2</id>
    </interactant>
    <interactant intactId="EBI-10104898">
        <id>P55087</id>
        <label>AQP4</label>
    </interactant>
    <organismsDiffer>false</organismsDiffer>
    <experiments>3</experiments>
</comment>
<comment type="interaction">
    <interactant intactId="EBI-625022">
        <id>O43889-2</id>
    </interactant>
    <interactant intactId="EBI-2810045">
        <id>P09871</id>
        <label>C1S</label>
    </interactant>
    <organismsDiffer>false</organismsDiffer>
    <experiments>3</experiments>
</comment>
<comment type="interaction">
    <interactant intactId="EBI-625022">
        <id>O43889-2</id>
    </interactant>
    <interactant intactId="EBI-2835920">
        <id>P06681</id>
        <label>C2</label>
    </interactant>
    <organismsDiffer>false</organismsDiffer>
    <experiments>3</experiments>
</comment>
<comment type="interaction">
    <interactant intactId="EBI-625022">
        <id>O43889-2</id>
    </interactant>
    <interactant intactId="EBI-608322">
        <id>P32246</id>
        <label>CCR1</label>
    </interactant>
    <organismsDiffer>false</organismsDiffer>
    <experiments>7</experiments>
</comment>
<comment type="interaction">
    <interactant intactId="EBI-625022">
        <id>O43889-2</id>
    </interactant>
    <interactant intactId="EBI-2873235">
        <id>Q9UJ71</id>
        <label>CD207</label>
    </interactant>
    <organismsDiffer>false</organismsDiffer>
    <experiments>3</experiments>
</comment>
<comment type="interaction">
    <interactant intactId="EBI-625022">
        <id>O43889-2</id>
    </interactant>
    <interactant intactId="EBI-11579371">
        <id>Q9BXR6</id>
        <label>CFHR5</label>
    </interactant>
    <organismsDiffer>false</organismsDiffer>
    <experiments>3</experiments>
</comment>
<comment type="interaction">
    <interactant intactId="EBI-625022">
        <id>O43889-2</id>
    </interactant>
    <interactant intactId="EBI-12256978">
        <id>Q8N6F1-2</id>
        <label>CLDN19</label>
    </interactant>
    <organismsDiffer>false</organismsDiffer>
    <experiments>3</experiments>
</comment>
<comment type="interaction">
    <interactant intactId="EBI-625022">
        <id>O43889-2</id>
    </interactant>
    <interactant intactId="EBI-1042699">
        <id>Q8IUR6</id>
        <label>CREBRF</label>
    </interactant>
    <organismsDiffer>false</organismsDiffer>
    <experiments>4</experiments>
</comment>
<comment type="interaction">
    <interactant intactId="EBI-625022">
        <id>O43889-2</id>
    </interactant>
    <interactant intactId="EBI-1752413">
        <id>P78329</id>
        <label>CYP4F2</label>
    </interactant>
    <organismsDiffer>false</organismsDiffer>
    <experiments>3</experiments>
</comment>
<comment type="interaction">
    <interactant intactId="EBI-625022">
        <id>O43889-2</id>
    </interactant>
    <interactant intactId="EBI-6095316">
        <id>Q9H295</id>
        <label>DCSTAMP</label>
    </interactant>
    <organismsDiffer>false</organismsDiffer>
    <experiments>6</experiments>
</comment>
<comment type="interaction">
    <interactant intactId="EBI-625022">
        <id>O43889-2</id>
    </interactant>
    <interactant intactId="EBI-3915253">
        <id>Q15125</id>
        <label>EBP</label>
    </interactant>
    <organismsDiffer>false</organismsDiffer>
    <experiments>3</experiments>
</comment>
<comment type="interaction">
    <interactant intactId="EBI-625022">
        <id>O43889-2</id>
    </interactant>
    <interactant intactId="EBI-489887">
        <id>P50402</id>
        <label>EMD</label>
    </interactant>
    <organismsDiffer>false</organismsDiffer>
    <experiments>3</experiments>
</comment>
<comment type="interaction">
    <interactant intactId="EBI-625022">
        <id>O43889-2</id>
    </interactant>
    <interactant intactId="EBI-714550">
        <id>P37268</id>
        <label>FDFT1</label>
    </interactant>
    <organismsDiffer>false</organismsDiffer>
    <experiments>3</experiments>
</comment>
<comment type="interaction">
    <interactant intactId="EBI-625022">
        <id>O43889-2</id>
    </interactant>
    <interactant intactId="EBI-12701460">
        <id>Q01740</id>
        <label>FMO1</label>
    </interactant>
    <organismsDiffer>false</organismsDiffer>
    <experiments>3</experiments>
</comment>
<comment type="interaction">
    <interactant intactId="EBI-625022">
        <id>O43889-2</id>
    </interactant>
    <interactant intactId="EBI-12361463">
        <id>P31513</id>
        <label>FMO3</label>
    </interactant>
    <organismsDiffer>false</organismsDiffer>
    <experiments>4</experiments>
</comment>
<comment type="interaction">
    <interactant intactId="EBI-625022">
        <id>O43889-2</id>
    </interactant>
    <interactant intactId="EBI-1103439">
        <id>P17302</id>
        <label>GJA1</label>
    </interactant>
    <organismsDiffer>false</organismsDiffer>
    <experiments>4</experiments>
</comment>
<comment type="interaction">
    <interactant intactId="EBI-625022">
        <id>O43889-2</id>
    </interactant>
    <interactant intactId="EBI-12044847">
        <id>A0A0C4DFT7</id>
        <label>GYPA</label>
    </interactant>
    <organismsDiffer>false</organismsDiffer>
    <experiments>3</experiments>
</comment>
<comment type="interaction">
    <interactant intactId="EBI-625022">
        <id>O43889-2</id>
    </interactant>
    <interactant intactId="EBI-396176">
        <id>P51610</id>
        <label>HCFC1</label>
    </interactant>
    <organismsDiffer>false</organismsDiffer>
    <experiments>4</experiments>
</comment>
<comment type="interaction">
    <interactant intactId="EBI-625022">
        <id>O43889-2</id>
    </interactant>
    <interactant intactId="EBI-720480">
        <id>P24593</id>
        <label>IGFBP5</label>
    </interactant>
    <organismsDiffer>false</organismsDiffer>
    <experiments>4</experiments>
</comment>
<comment type="interaction">
    <interactant intactId="EBI-625022">
        <id>O43889-2</id>
    </interactant>
    <interactant intactId="EBI-2820517">
        <id>Q8TAF8</id>
        <label>LHFPL5</label>
    </interactant>
    <organismsDiffer>false</organismsDiffer>
    <experiments>4</experiments>
</comment>
<comment type="interaction">
    <interactant intactId="EBI-625022">
        <id>O43889-2</id>
    </interactant>
    <interactant intactId="EBI-11984863">
        <id>Q6FG55</id>
        <label>LTA</label>
    </interactant>
    <organismsDiffer>false</organismsDiffer>
    <experiments>3</experiments>
</comment>
<comment type="interaction">
    <interactant intactId="EBI-625022">
        <id>O43889-2</id>
    </interactant>
    <interactant intactId="EBI-11324706">
        <id>Q99735</id>
        <label>MGST2</label>
    </interactant>
    <organismsDiffer>false</organismsDiffer>
    <experiments>3</experiments>
</comment>
<comment type="interaction">
    <interactant intactId="EBI-625022">
        <id>O43889-2</id>
    </interactant>
    <interactant intactId="EBI-721517">
        <id>Q99519</id>
        <label>NEU1</label>
    </interactant>
    <organismsDiffer>false</organismsDiffer>
    <experiments>3</experiments>
</comment>
<comment type="interaction">
    <interactant intactId="EBI-625022">
        <id>O43889-2</id>
    </interactant>
    <interactant intactId="EBI-692836">
        <id>P26678</id>
        <label>PLN</label>
    </interactant>
    <organismsDiffer>false</organismsDiffer>
    <experiments>3</experiments>
</comment>
<comment type="interaction">
    <interactant intactId="EBI-625022">
        <id>O43889-2</id>
    </interactant>
    <interactant intactId="EBI-12188331">
        <id>P60201-2</id>
        <label>PLP1</label>
    </interactant>
    <organismsDiffer>false</organismsDiffer>
    <experiments>3</experiments>
</comment>
<comment type="interaction">
    <interactant intactId="EBI-625022">
        <id>O43889-2</id>
    </interactant>
    <interactant intactId="EBI-2845982">
        <id>Q01453</id>
        <label>PMP22</label>
    </interactant>
    <organismsDiffer>false</organismsDiffer>
    <experiments>3</experiments>
</comment>
<comment type="interaction">
    <interactant intactId="EBI-625022">
        <id>O43889-2</id>
    </interactant>
    <interactant intactId="EBI-1223454">
        <id>P05155</id>
        <label>SERPING1</label>
    </interactant>
    <organismsDiffer>false</organismsDiffer>
    <experiments>3</experiments>
</comment>
<comment type="interaction">
    <interactant intactId="EBI-625022">
        <id>O43889-2</id>
    </interactant>
    <interactant intactId="EBI-10197617">
        <id>P11686</id>
        <label>SFTPC</label>
    </interactant>
    <organismsDiffer>false</organismsDiffer>
    <experiments>3</experiments>
</comment>
<comment type="interaction">
    <interactant intactId="EBI-625022">
        <id>O43889-2</id>
    </interactant>
    <interactant intactId="EBI-12701374">
        <id>Q9BZD2</id>
        <label>SLC29A3</label>
    </interactant>
    <organismsDiffer>false</organismsDiffer>
    <experiments>3</experiments>
</comment>
<comment type="interaction">
    <interactant intactId="EBI-625022">
        <id>O43889-2</id>
    </interactant>
    <interactant intactId="EBI-717153">
        <id>P11166</id>
        <label>SLC2A1</label>
    </interactant>
    <organismsDiffer>false</organismsDiffer>
    <experiments>3</experiments>
</comment>
<comment type="interaction">
    <interactant intactId="EBI-625022">
        <id>O43889-2</id>
    </interactant>
    <interactant intactId="EBI-367146">
        <id>P14672</id>
        <label>SLC2A4</label>
    </interactant>
    <organismsDiffer>false</organismsDiffer>
    <experiments>3</experiments>
</comment>
<comment type="interaction">
    <interactant intactId="EBI-625022">
        <id>O43889-2</id>
    </interactant>
    <interactant intactId="EBI-8644112">
        <id>Q9BRI3</id>
        <label>SLC30A2</label>
    </interactant>
    <organismsDiffer>false</organismsDiffer>
    <experiments>3</experiments>
</comment>
<comment type="interaction">
    <interactant intactId="EBI-625022">
        <id>O43889-2</id>
    </interactant>
    <interactant intactId="EBI-3936589">
        <id>P82251</id>
        <label>SLC7A9</label>
    </interactant>
    <organismsDiffer>false</organismsDiffer>
    <experiments>3</experiments>
</comment>
<comment type="interaction">
    <interactant intactId="EBI-625022">
        <id>O43889-2</id>
    </interactant>
    <interactant intactId="EBI-12187159">
        <id>O43759-2</id>
        <label>SYNGR1</label>
    </interactant>
    <organismsDiffer>false</organismsDiffer>
    <experiments>3</experiments>
</comment>
<comment type="interaction">
    <interactant intactId="EBI-625022">
        <id>O43889-2</id>
    </interactant>
    <interactant intactId="EBI-682393">
        <id>Q8TAA9</id>
        <label>VANGL1</label>
    </interactant>
    <organismsDiffer>false</organismsDiffer>
    <experiments>3</experiments>
</comment>
<comment type="interaction">
    <interactant intactId="EBI-625022">
        <id>O43889-2</id>
    </interactant>
    <interactant intactId="EBI-12690113">
        <id>Q9Y397</id>
        <label>ZDHHC9</label>
    </interactant>
    <organismsDiffer>false</organismsDiffer>
    <experiments>3</experiments>
</comment>
<comment type="interaction">
    <interactant intactId="EBI-625022">
        <id>O43889-2</id>
    </interactant>
    <interactant intactId="EBI-909718">
        <id>P29846</id>
    </interactant>
    <organismsDiffer>true</organismsDiffer>
    <experiments>8</experiments>
</comment>
<comment type="subcellular location">
    <molecule>Isoform 1</molecule>
    <subcellularLocation>
        <location evidence="3 7 14">Endoplasmic reticulum membrane</location>
        <topology evidence="1 7">Single-pass type II membrane protein</topology>
    </subcellularLocation>
    <subcellularLocation>
        <location evidence="3">Golgi apparatus</location>
    </subcellularLocation>
    <text evidence="3 17">Colocalizes with HCFC1 in neuronal cell bodies of the trigeminal ganglia (PubMed:10623756). Colocalizes with DCSTAMP in the ER membrane of immature dendritic cell (DC) (PubMed:20546900). Colocalizes with CANX, CCR1, HCFC1 in the ER membrane (PubMed:10623756).</text>
</comment>
<comment type="subcellular location">
    <molecule>Isoform 1</molecule>
    <subcellularLocation>
        <location>Cytoplasm</location>
    </subcellularLocation>
    <text evidence="5">(Microbial infection) Sequestered into the cytoplasm by the HCV core protein.</text>
</comment>
<comment type="subcellular location">
    <molecule>Isoform 2</molecule>
    <subcellularLocation>
        <location evidence="16">Nucleus</location>
    </subcellularLocation>
    <subcellularLocation>
        <location evidence="16">Cytoplasm</location>
    </subcellularLocation>
    <text evidence="16">Predominantly in the nucleus (PubMed:19779205). Not associated with membranes (PubMed:19779205).</text>
</comment>
<comment type="subcellular location">
    <molecule>Processed cyclic AMP-responsive element-binding protein 3</molecule>
    <subcellularLocation>
        <location>Nucleus</location>
    </subcellularLocation>
    <text evidence="5 9 14 17">Upon RIP activation the transcriptional active processed cyclic AMP-responsive element-binding protein 3 form translocates into the nucleus. Detected in the nucleus upon dendritic cell maturation and RIP activation. Colocalizes with CREBRF in nuclear foci. Colocalizes with CREBZF in promyelocytic leukemia protein nuclear bodies (PML-NB).</text>
</comment>
<comment type="alternative products">
    <event type="alternative splicing"/>
    <isoform>
        <id>O43889-2</id>
        <name>1</name>
        <name>LZIP</name>
        <sequence type="displayed"/>
    </isoform>
    <isoform>
        <id>O43889-3</id>
        <name>2</name>
        <name>small LZIP</name>
        <name>sLZIP</name>
        <sequence type="described" ref="VSP_059386"/>
    </isoform>
</comment>
<comment type="tissue specificity">
    <text evidence="16 17 18">Ubiquitously expressed (PubMed:19779205, PubMed:9271389). Expressed in dendritic cells (DC). Weakly expressed in monocytes (at protein level) (PubMed:20546900).</text>
</comment>
<comment type="induction">
    <text evidence="10 11 13 14 17">Up-regulated upon differentiation of monocytes towards immature dendritic cells (DC). Down-regulated upon DC maturation. Up-regulated by endoplasmic reticulum stress triggered by thapsigargin (Tg) or tunicamycin (Tm). Up-regulated by CCR1-dependent chemokines in an immediate early response and biphasic manner and by NF-kappa-B.</text>
</comment>
<comment type="PTM">
    <text evidence="7 11 12 14 17">First proteolytically cleaved by site-1 protease (S1P) that generates membrane-associated N-terminus and a luminal C-terminus forms. The membrane-associated N-terminus form is further proteolytically processed probably by the site-2 protease (S2P) through a regulated intramembrane proteolysis (RIP), releasing the transcriptional active processed cyclic AMP-responsive element-binding protein 3 form, which is transported to the nucleus. The proteolytic cleavage is strongly induced during dendritic cell (DC) maturation and inhibited by DCSTAMP. That form is rapidly degraded.</text>
</comment>
<comment type="PTM">
    <text evidence="7 11">N-glycosylated.</text>
</comment>
<comment type="miscellaneous">
    <molecule>Isoform 2</molecule>
    <text evidence="20">Does not contain a helical transmembrane domain.</text>
</comment>
<comment type="similarity">
    <text evidence="20">Belongs to the bZIP family. ATF subfamily.</text>
</comment>
<comment type="caution">
    <text evidence="20">All experiments concerning the proteolytic cleavage are done with isoform 1.</text>
</comment>
<comment type="sequence caution" evidence="20">
    <conflict type="miscellaneous discrepancy">
        <sequence resource="EMBL-CDS" id="AAC04325"/>
    </conflict>
    <text>Probable cloning artifact.</text>
</comment>
<feature type="chain" id="PRO_0000076602" description="Cyclic AMP-responsive element-binding protein 3">
    <location>
        <begin position="1"/>
        <end position="371"/>
    </location>
</feature>
<feature type="chain" id="PRO_0000296204" description="Processed cyclic AMP-responsive element-binding protein 3">
    <location>
        <begin position="1"/>
        <end status="unknown"/>
    </location>
</feature>
<feature type="topological domain" description="Cytoplasmic" evidence="7">
    <location>
        <begin position="1"/>
        <end position="230"/>
    </location>
</feature>
<feature type="transmembrane region" description="Helical; Signal-anchor for type II membrane protein" evidence="1">
    <location>
        <begin position="231"/>
        <end position="247"/>
    </location>
</feature>
<feature type="topological domain" description="Lumenal" evidence="7">
    <location>
        <begin position="248"/>
        <end position="371"/>
    </location>
</feature>
<feature type="domain" description="bZIP" evidence="2">
    <location>
        <begin position="150"/>
        <end position="213"/>
    </location>
</feature>
<feature type="region of interest" description="Transcription activation (acidic)" evidence="6">
    <location>
        <begin position="1"/>
        <end position="92"/>
    </location>
</feature>
<feature type="region of interest" description="Basic motif" evidence="2">
    <location>
        <begin position="152"/>
        <end position="184"/>
    </location>
</feature>
<feature type="region of interest" description="Leucine-zipper" evidence="2">
    <location>
        <begin position="192"/>
        <end position="213"/>
    </location>
</feature>
<feature type="short sequence motif" description="LXXLL motif 1">
    <location>
        <begin position="13"/>
        <end position="17"/>
    </location>
</feature>
<feature type="short sequence motif" description="LXXLL motif 2">
    <location>
        <begin position="54"/>
        <end position="58"/>
    </location>
</feature>
<feature type="short sequence motif" description="HCFC1-binding-motif (HBM)">
    <location>
        <begin position="78"/>
        <end position="81"/>
    </location>
</feature>
<feature type="site" description="Cleavage; by PS1" evidence="7">
    <location>
        <begin position="263"/>
        <end position="264"/>
    </location>
</feature>
<feature type="site" description="Cleavage; by PS1" evidence="7">
    <location>
        <begin position="266"/>
        <end position="267"/>
    </location>
</feature>
<feature type="glycosylation site" description="N-linked (GlcNAc...) asparagine" evidence="1">
    <location>
        <position position="307"/>
    </location>
</feature>
<feature type="glycosylation site" description="N-linked (GlcNAc...) asparagine" evidence="1">
    <location>
        <position position="348"/>
    </location>
</feature>
<feature type="splice variant" id="VSP_059386" description="In isoform 2.">
    <location>
        <begin position="229"/>
        <end position="245"/>
    </location>
</feature>
<feature type="mutagenesis site" description="Does not inhibit interaction with HCFC1. Reduces transcriptional activation. Inhibits strongly transcriptional activation; when associated with 56-A-A-57 and 78-A--A-81 (isoform 1)." evidence="6">
    <original>LL</original>
    <variation>AA</variation>
    <location>
        <begin position="12"/>
        <end position="13"/>
    </location>
</feature>
<feature type="mutagenesis site" description="Does not affect the transcriptional activation of the glucocorticoid receptor NR3C1; when associated with 57-A-A-58 (isoform 2)." evidence="6 16">
    <original>LL</original>
    <variation>AA</variation>
    <location>
        <begin position="16"/>
        <end position="17"/>
    </location>
</feature>
<feature type="mutagenesis site" description="Does not affect the transcriptional activation of the glucocorticoid receptor NR3C1; when associated with 16-A-A-17 (isoform 2)." evidence="16">
    <original>LL</original>
    <variation>AA</variation>
    <location>
        <begin position="57"/>
        <end position="58"/>
    </location>
</feature>
<feature type="mutagenesis site" description="Does not inhibit interaction with HCFC1. Reduces transcriptional activation. Inhibits strongly transcriptional activation; when associated with 12-A-A-13 and 78-A--A-81 (isoform 1)." evidence="16">
    <original>LL</original>
    <variation>AA</variation>
    <location>
        <begin position="57"/>
        <end position="58"/>
    </location>
</feature>
<feature type="mutagenesis site" description="Inhibits interaction with HCFC1. Reduces transcriptional activation. Inhibits strongly transcriptional activation; when associated with 12-A-A-13 and 56-A-A-57. Colocalizes with HCFC1 in the nucleus (isoform 1)." evidence="6 9">
    <original>DHTY</original>
    <variation>AAAA</variation>
    <location>
        <begin position="78"/>
        <end position="81"/>
    </location>
</feature>
<feature type="mutagenesis site" description="Does not retain HCFC1 in the cytoplasm, does not interact with HCFC1, does not activate promoter and fail to protect cells from a productive infection by HSV-1." evidence="3">
    <original>Y</original>
    <variation>A</variation>
    <location>
        <position position="81"/>
    </location>
</feature>
<feature type="mutagenesis site" description="Does not bind to DNA but retains its ability to interact with HCFC1. Reduces transcriptional activation of unfolded protein response elements (UPRE)-containing promoter. Colocalizes with HCFC1 in the ER membrane." evidence="9">
    <original>N</original>
    <variation>G</variation>
    <location>
        <position position="160"/>
    </location>
</feature>
<feature type="mutagenesis site" description="Does not inhibit proteolytic cleavage and transcriptional activation." evidence="7">
    <original>R</original>
    <variation>A</variation>
    <location>
        <position position="252"/>
    </location>
</feature>
<feature type="mutagenesis site" description="Inhibits proteolytic cleavage and transcriptional activation." evidence="7">
    <original>R</original>
    <variation>G</variation>
    <location>
        <position position="264"/>
    </location>
</feature>
<feature type="mutagenesis site" description="Inhibits proteolytic cleavage and transcriptional activation." evidence="7">
    <original>R</original>
    <variation>G</variation>
    <location>
        <position position="267"/>
    </location>
</feature>
<feature type="sequence conflict" description="In Ref. 6; AAG43527." evidence="20" ref="6">
    <original>G</original>
    <variation>E</variation>
    <location>
        <position position="21"/>
    </location>
</feature>
<feature type="sequence conflict" description="In Ref. 3; AAD09210." evidence="20" ref="3">
    <original>C</original>
    <variation>G</variation>
    <location>
        <position position="230"/>
    </location>
</feature>
<feature type="sequence conflict" description="In Ref. 8; AAH09402." evidence="20" ref="8">
    <original>M</original>
    <variation>I</variation>
    <location>
        <position position="246"/>
    </location>
</feature>
<feature type="sequence conflict" description="In Ref. 3; AAD09210." evidence="20" ref="3">
    <original>L</original>
    <variation>C</variation>
    <location>
        <position position="262"/>
    </location>
</feature>
<feature type="sequence conflict" description="In Ref. 1; AAB69652." evidence="20" ref="1">
    <original>F</original>
    <variation>S</variation>
    <location>
        <position position="333"/>
    </location>
</feature>
<feature type="sequence conflict" description="In Ref. 3; AAD09210." evidence="20" ref="3">
    <original>C</original>
    <variation>V</variation>
    <location>
        <position position="338"/>
    </location>
</feature>
<protein>
    <recommendedName>
        <fullName>Cyclic AMP-responsive element-binding protein 3</fullName>
        <shortName>CREB-3</shortName>
        <shortName>cAMP-responsive element-binding protein 3</shortName>
    </recommendedName>
    <alternativeName>
        <fullName>Leucine zipper protein</fullName>
    </alternativeName>
    <alternativeName>
        <fullName>Luman</fullName>
    </alternativeName>
    <alternativeName>
        <fullName>Transcription factor LZIP-alpha</fullName>
    </alternativeName>
    <component>
        <recommendedName>
            <fullName>Processed cyclic AMP-responsive element-binding protein 3</fullName>
            <shortName>N-terminal Luman</shortName>
            <shortName>Transcriptionally active form</shortName>
        </recommendedName>
    </component>
</protein>
<accession>O43889</accession>
<accession>D0PTW6</accession>
<accession>O14671</accession>
<accession>O14919</accession>
<accession>Q5TCV1</accession>
<accession>Q96GK8</accession>
<accession>Q9H2W3</accession>
<accession>Q9UE77</accession>
<evidence type="ECO:0000255" key="1"/>
<evidence type="ECO:0000255" key="2">
    <source>
        <dbReference type="PROSITE-ProRule" id="PRU00978"/>
    </source>
</evidence>
<evidence type="ECO:0000269" key="3">
    <source>
    </source>
</evidence>
<evidence type="ECO:0000269" key="4">
    <source>
    </source>
</evidence>
<evidence type="ECO:0000269" key="5">
    <source>
    </source>
</evidence>
<evidence type="ECO:0000269" key="6">
    <source>
    </source>
</evidence>
<evidence type="ECO:0000269" key="7">
    <source>
    </source>
</evidence>
<evidence type="ECO:0000269" key="8">
    <source>
    </source>
</evidence>
<evidence type="ECO:0000269" key="9">
    <source>
    </source>
</evidence>
<evidence type="ECO:0000269" key="10">
    <source>
    </source>
</evidence>
<evidence type="ECO:0000269" key="11">
    <source>
    </source>
</evidence>
<evidence type="ECO:0000269" key="12">
    <source>
    </source>
</evidence>
<evidence type="ECO:0000269" key="13">
    <source>
    </source>
</evidence>
<evidence type="ECO:0000269" key="14">
    <source>
    </source>
</evidence>
<evidence type="ECO:0000269" key="15">
    <source>
    </source>
</evidence>
<evidence type="ECO:0000269" key="16">
    <source>
    </source>
</evidence>
<evidence type="ECO:0000269" key="17">
    <source>
    </source>
</evidence>
<evidence type="ECO:0000269" key="18">
    <source>
    </source>
</evidence>
<evidence type="ECO:0000269" key="19">
    <source>
    </source>
</evidence>
<evidence type="ECO:0000305" key="20"/>
<keyword id="KW-0010">Activator</keyword>
<keyword id="KW-0025">Alternative splicing</keyword>
<keyword id="KW-0145">Chemotaxis</keyword>
<keyword id="KW-0963">Cytoplasm</keyword>
<keyword id="KW-0238">DNA-binding</keyword>
<keyword id="KW-0256">Endoplasmic reticulum</keyword>
<keyword id="KW-0325">Glycoprotein</keyword>
<keyword id="KW-0333">Golgi apparatus</keyword>
<keyword id="KW-0945">Host-virus interaction</keyword>
<keyword id="KW-0472">Membrane</keyword>
<keyword id="KW-0539">Nucleus</keyword>
<keyword id="KW-1267">Proteomics identification</keyword>
<keyword id="KW-1185">Reference proteome</keyword>
<keyword id="KW-0677">Repeat</keyword>
<keyword id="KW-0678">Repressor</keyword>
<keyword id="KW-0735">Signal-anchor</keyword>
<keyword id="KW-0804">Transcription</keyword>
<keyword id="KW-0805">Transcription regulation</keyword>
<keyword id="KW-0812">Transmembrane</keyword>
<keyword id="KW-1133">Transmembrane helix</keyword>
<keyword id="KW-0834">Unfolded protein response</keyword>
<gene>
    <name type="primary">CREB3</name>
    <name type="synonym">LZIP</name>
</gene>
<sequence>MELELDAGDQDLLAFLLEESGDLGTAPDEAVRAPLDWALPLSEVPSDWEVDDLLCSLLSPPASLNILSSSNPCLVHHDHTYSLPRETVSMDLESESCRKEGTQMTPQHMEELAEQEIARLVLTDEEKSLLEKEGLILPETLPLTKTEEQILKRVRRKIRNKRSAQESRRKKKVYVGGLESRVLKYTAQNMELQNKVQLLEEQNLSLLDQLRKLQAMVIEISNKTSSSSTCILVLLVSFCLLLVPAMYSSDTRGSLPAEHGVLSRQLRALPSEDPYQLELPALQSEVPKDSTHQWLDGSDCVLQAPGNTSCLLHYMPQAPSAEPPLEWPFPDLFSEPLCRGPILPLQANLTRKGGWLPTGSPSVILQDRYSG</sequence>
<name>CREB3_HUMAN</name>
<reference key="1">
    <citation type="journal article" date="1997" name="Mol. Cell. Biol.">
        <title>Luman, a new member of the CREB/ATF family, binds to herpes simplex virus VP16-associated host cellular factor.</title>
        <authorList>
            <person name="Lu R."/>
            <person name="Yang P."/>
            <person name="O'Hare P."/>
            <person name="Misra V."/>
        </authorList>
    </citation>
    <scope>NUCLEOTIDE SEQUENCE [MRNA] (ISOFORM 1)</scope>
    <scope>FUNCTION (ISOFORM 1)</scope>
    <scope>DNA-BINDING (ISOFORM 1)</scope>
    <scope>INTERACTION WITH HCFC1 (ISOFORM 1)</scope>
    <scope>TISSUE SPECIFICITY</scope>
    <source>
        <tissue>Cervix carcinoma</tissue>
    </source>
</reference>
<reference key="2">
    <citation type="journal article" date="1997" name="Genes Dev.">
        <title>Viral mimicry: common mode of association with HCF by VP16 and the cellular protein LZIP.</title>
        <authorList>
            <person name="Freiman R.N."/>
            <person name="Herr W."/>
        </authorList>
    </citation>
    <scope>NUCLEOTIDE SEQUENCE [MRNA] (ISOFORM 1)</scope>
    <scope>INTERACTION WITH HCFC1 (ISOFORM 1)</scope>
    <source>
        <tissue>Cervix carcinoma</tissue>
    </source>
</reference>
<reference key="3">
    <citation type="journal article" date="2000" name="EMBO J.">
        <title>Hepatitis C virus core protein-induced loss of LZIP function correlates with cellular transformation.</title>
        <authorList>
            <person name="Jin D.-Y."/>
            <person name="Wang H.-L."/>
            <person name="Zhou Y."/>
            <person name="Chun A.C.S."/>
            <person name="Kibler K.V."/>
            <person name="Hou Y.-D."/>
            <person name="Kung H.-F."/>
            <person name="Jeang K.-T."/>
        </authorList>
    </citation>
    <scope>NUCLEOTIDE SEQUENCE [GENOMIC DNA] (ISOFORM 1)</scope>
    <scope>FUNCTION IN CELL PROLIFERATION (MICROBIAL INFECTION)</scope>
    <scope>HOMODIMERIZATION</scope>
    <scope>INTERACTION WITH HCV CORE PROTEIN (MICROBIAL INFECTION)</scope>
    <scope>DNA-BINDING</scope>
    <scope>SUBCELLULAR LOCATION</scope>
    <source>
        <tissue>Fetal liver</tissue>
    </source>
</reference>
<reference key="4">
    <citation type="journal article" date="2009" name="Mol. Endocrinol.">
        <title>A novel isoform of human LZIP negatively regulates the transactivation of the glucocorticoid receptor.</title>
        <authorList>
            <person name="Kang H."/>
            <person name="Kim Y.S."/>
            <person name="Ko J."/>
        </authorList>
    </citation>
    <scope>NUCLEOTIDE SEQUENCE [MRNA] (ISOFORM 2)</scope>
    <scope>ALTERNATIVE SPLICING (ISOFORM 1)</scope>
    <scope>FUNCTION IN LKN-1-STIMULATED CHEMOTAXIS SIGNALING (ISOFORM 1)</scope>
    <scope>FUNCTION IN GLUCOCORTICOID-INDUCED TRANSCRIPTIONAL REPRESSION (ISOFORM 2)</scope>
    <scope>SUBCELLULAR LOCATION (ISOFORMS 1 AND 2)</scope>
    <scope>TISSUE SPECIFICITY (ISOFORMS 1 AND 2)</scope>
    <scope>MUTAGENESIS OF 16-LEU-LEU-17 AND 57-LEU-LEU-58</scope>
</reference>
<reference key="5">
    <citation type="submission" date="1997-02" db="EMBL/GenBank/DDBJ databases">
        <title>Novel activation and inhibitory domains of LZIP isoforms, retinoic acid-inducible genes in P19 embryonal carcinoma cell, differentially activate transcription in mouse development.</title>
        <authorList>
            <person name="Hayashi M."/>
            <person name="Tanaka T."/>
        </authorList>
    </citation>
    <scope>NUCLEOTIDE SEQUENCE [MRNA] (ISOFORM 1)</scope>
    <source>
        <tissue>Brain</tissue>
    </source>
</reference>
<reference key="6">
    <citation type="submission" date="1999-12" db="EMBL/GenBank/DDBJ databases">
        <title>Complete nucleotide sequence and genomic structure of the human cAMP responsive element binding protein 3 (Luman) gene (CREB3).</title>
        <authorList>
            <person name="Ben-Yosef T."/>
            <person name="Francomano C.A."/>
        </authorList>
    </citation>
    <scope>NUCLEOTIDE SEQUENCE [GENOMIC DNA / MRNA] (ISOFORM 1)</scope>
</reference>
<reference key="7">
    <citation type="journal article" date="2004" name="Nature">
        <title>DNA sequence and analysis of human chromosome 9.</title>
        <authorList>
            <person name="Humphray S.J."/>
            <person name="Oliver K."/>
            <person name="Hunt A.R."/>
            <person name="Plumb R.W."/>
            <person name="Loveland J.E."/>
            <person name="Howe K.L."/>
            <person name="Andrews T.D."/>
            <person name="Searle S."/>
            <person name="Hunt S.E."/>
            <person name="Scott C.E."/>
            <person name="Jones M.C."/>
            <person name="Ainscough R."/>
            <person name="Almeida J.P."/>
            <person name="Ambrose K.D."/>
            <person name="Ashwell R.I.S."/>
            <person name="Babbage A.K."/>
            <person name="Babbage S."/>
            <person name="Bagguley C.L."/>
            <person name="Bailey J."/>
            <person name="Banerjee R."/>
            <person name="Barker D.J."/>
            <person name="Barlow K.F."/>
            <person name="Bates K."/>
            <person name="Beasley H."/>
            <person name="Beasley O."/>
            <person name="Bird C.P."/>
            <person name="Bray-Allen S."/>
            <person name="Brown A.J."/>
            <person name="Brown J.Y."/>
            <person name="Burford D."/>
            <person name="Burrill W."/>
            <person name="Burton J."/>
            <person name="Carder C."/>
            <person name="Carter N.P."/>
            <person name="Chapman J.C."/>
            <person name="Chen Y."/>
            <person name="Clarke G."/>
            <person name="Clark S.Y."/>
            <person name="Clee C.M."/>
            <person name="Clegg S."/>
            <person name="Collier R.E."/>
            <person name="Corby N."/>
            <person name="Crosier M."/>
            <person name="Cummings A.T."/>
            <person name="Davies J."/>
            <person name="Dhami P."/>
            <person name="Dunn M."/>
            <person name="Dutta I."/>
            <person name="Dyer L.W."/>
            <person name="Earthrowl M.E."/>
            <person name="Faulkner L."/>
            <person name="Fleming C.J."/>
            <person name="Frankish A."/>
            <person name="Frankland J.A."/>
            <person name="French L."/>
            <person name="Fricker D.G."/>
            <person name="Garner P."/>
            <person name="Garnett J."/>
            <person name="Ghori J."/>
            <person name="Gilbert J.G.R."/>
            <person name="Glison C."/>
            <person name="Grafham D.V."/>
            <person name="Gribble S."/>
            <person name="Griffiths C."/>
            <person name="Griffiths-Jones S."/>
            <person name="Grocock R."/>
            <person name="Guy J."/>
            <person name="Hall R.E."/>
            <person name="Hammond S."/>
            <person name="Harley J.L."/>
            <person name="Harrison E.S.I."/>
            <person name="Hart E.A."/>
            <person name="Heath P.D."/>
            <person name="Henderson C.D."/>
            <person name="Hopkins B.L."/>
            <person name="Howard P.J."/>
            <person name="Howden P.J."/>
            <person name="Huckle E."/>
            <person name="Johnson C."/>
            <person name="Johnson D."/>
            <person name="Joy A.A."/>
            <person name="Kay M."/>
            <person name="Keenan S."/>
            <person name="Kershaw J.K."/>
            <person name="Kimberley A.M."/>
            <person name="King A."/>
            <person name="Knights A."/>
            <person name="Laird G.K."/>
            <person name="Langford C."/>
            <person name="Lawlor S."/>
            <person name="Leongamornlert D.A."/>
            <person name="Leversha M."/>
            <person name="Lloyd C."/>
            <person name="Lloyd D.M."/>
            <person name="Lovell J."/>
            <person name="Martin S."/>
            <person name="Mashreghi-Mohammadi M."/>
            <person name="Matthews L."/>
            <person name="McLaren S."/>
            <person name="McLay K.E."/>
            <person name="McMurray A."/>
            <person name="Milne S."/>
            <person name="Nickerson T."/>
            <person name="Nisbett J."/>
            <person name="Nordsiek G."/>
            <person name="Pearce A.V."/>
            <person name="Peck A.I."/>
            <person name="Porter K.M."/>
            <person name="Pandian R."/>
            <person name="Pelan S."/>
            <person name="Phillimore B."/>
            <person name="Povey S."/>
            <person name="Ramsey Y."/>
            <person name="Rand V."/>
            <person name="Scharfe M."/>
            <person name="Sehra H.K."/>
            <person name="Shownkeen R."/>
            <person name="Sims S.K."/>
            <person name="Skuce C.D."/>
            <person name="Smith M."/>
            <person name="Steward C.A."/>
            <person name="Swarbreck D."/>
            <person name="Sycamore N."/>
            <person name="Tester J."/>
            <person name="Thorpe A."/>
            <person name="Tracey A."/>
            <person name="Tromans A."/>
            <person name="Thomas D.W."/>
            <person name="Wall M."/>
            <person name="Wallis J.M."/>
            <person name="West A.P."/>
            <person name="Whitehead S.L."/>
            <person name="Willey D.L."/>
            <person name="Williams S.A."/>
            <person name="Wilming L."/>
            <person name="Wray P.W."/>
            <person name="Young L."/>
            <person name="Ashurst J.L."/>
            <person name="Coulson A."/>
            <person name="Blocker H."/>
            <person name="Durbin R.M."/>
            <person name="Sulston J.E."/>
            <person name="Hubbard T."/>
            <person name="Jackson M.J."/>
            <person name="Bentley D.R."/>
            <person name="Beck S."/>
            <person name="Rogers J."/>
            <person name="Dunham I."/>
        </authorList>
    </citation>
    <scope>NUCLEOTIDE SEQUENCE [LARGE SCALE GENOMIC DNA]</scope>
</reference>
<reference key="8">
    <citation type="journal article" date="2004" name="Genome Res.">
        <title>The status, quality, and expansion of the NIH full-length cDNA project: the Mammalian Gene Collection (MGC).</title>
        <authorList>
            <consortium name="The MGC Project Team"/>
        </authorList>
    </citation>
    <scope>NUCLEOTIDE SEQUENCE [LARGE SCALE MRNA] (ISOFORM 1)</scope>
    <source>
        <tissue>Pancreas</tissue>
        <tissue>Skin</tissue>
    </source>
</reference>
<reference key="9">
    <citation type="journal article" date="2000" name="J. Virol.">
        <title>Potential role for luman, the cellular homologue of herpes simplex virus VP16 (alpha gene trans-inducing factor), in herpesvirus latency.</title>
        <authorList>
            <person name="Lu R."/>
            <person name="Misra V."/>
        </authorList>
    </citation>
    <scope>FUNCTION IN HSV-1 INFECTION (MICROBIAL INFECTION)</scope>
    <scope>MUTAGENESIS OF TYR-81</scope>
    <scope>SUBCELLULAR LOCATION (ISOFORM 1)</scope>
</reference>
<reference key="10">
    <citation type="journal article" date="2000" name="Mol. Cell. Biol.">
        <title>Mutations in host cell factor 1 separate its role in cell proliferation from recruitment of VP16 and LZIP.</title>
        <authorList>
            <person name="Mahajan S.S."/>
            <person name="Wilson A.C."/>
        </authorList>
    </citation>
    <scope>INTERACTION WITH HCFC1</scope>
</reference>
<reference key="11">
    <citation type="journal article" date="2000" name="Proc. Natl. Acad. Sci. U.S.A.">
        <title>N-terminal transcriptional activation domain of LZIP comprises two LxxLL motifs and the host cell factor-1 binding motif.</title>
        <authorList>
            <person name="Luciano R.L."/>
            <person name="Wilson A.C."/>
        </authorList>
    </citation>
    <scope>FUNCTION IN TRANSCRIPTIONAL REGULATION (ISOFORM 1)</scope>
    <scope>INTERACTION WITH HCFC1</scope>
    <scope>REGION</scope>
    <scope>MUTAGENESIS OF 12-LEU-LEU-13; 16-LEU-LEU-17 AND 78-ASP--TYR-81</scope>
</reference>
<reference key="12">
    <citation type="journal article" date="2002" name="Mol. Cell. Biol.">
        <title>Luman, the cellular counterpart of herpes simplex virus VP16, is processed by regulated intramembrane proteolysis.</title>
        <authorList>
            <person name="Raggo C."/>
            <person name="Rapin N."/>
            <person name="Stirling J."/>
            <person name="Gobeil P."/>
            <person name="Smith-Windsor E."/>
            <person name="O'Hare P."/>
            <person name="Misra V."/>
        </authorList>
    </citation>
    <scope>GLYCOSYLATION</scope>
    <scope>SUBCELLULAR LOCATION</scope>
    <scope>TOPOLOGY</scope>
    <scope>PROTEOLYTIC PROCESSING</scope>
    <scope>CLEAVAGE SITE</scope>
    <scope>MUTAGENESIS OF ARG-252; ARG-264 AND ARG-267</scope>
</reference>
<reference key="13">
    <citation type="journal article" date="2004" name="FASEB J.">
        <title>Human LZIP binds to CCR1 and differentially affects the chemotactic activities of CCR1-dependent chemokines.</title>
        <authorList>
            <person name="Ko J."/>
            <person name="Jang S.W."/>
            <person name="Kim Y.S."/>
            <person name="Kim I.S."/>
            <person name="Sung H.J."/>
            <person name="Kim H.-H."/>
            <person name="Park J.Y."/>
            <person name="Lee Y.H."/>
            <person name="Kim J."/>
            <person name="Na D.S."/>
        </authorList>
    </citation>
    <scope>FUNCTION IN LKN-1-STIMULATED CHEMOTAXIS SIGNALING</scope>
    <scope>INTERACTION WITH CCR1</scope>
</reference>
<reference key="14">
    <citation type="journal article" date="2005" name="Biochem. Biophys. Res. Commun.">
        <title>Luman is capable of binding and activating transcription from the unfolded protein response element.</title>
        <authorList>
            <person name="DenBoer L.M."/>
            <person name="Hardy-Smith P.W."/>
            <person name="Hogan M.R."/>
            <person name="Cockram G.P."/>
            <person name="Audas T.E."/>
            <person name="Lu R."/>
        </authorList>
    </citation>
    <scope>FUNCTION IN THE UNFOLDED PROTEIN RESPONSE</scope>
    <scope>DNA-BINDING</scope>
    <scope>INDUCTION</scope>
</reference>
<reference key="15">
    <citation type="journal article" date="2005" name="J. Biol. Chem.">
        <title>Zhangfei is a potent and specific inhibitor of the host cell factor-binding transcription factor Luman.</title>
        <authorList>
            <person name="Misra V."/>
            <person name="Rapin N."/>
            <person name="Akhova O."/>
            <person name="Bainbridge M."/>
            <person name="Korchinski P."/>
        </authorList>
    </citation>
    <scope>FUNCTION (MICROBIAL INFECTION)</scope>
    <scope>INTERACTION WITH CREBZF AND HCFC1</scope>
    <scope>SUBCELLULAR LOCATION</scope>
    <scope>MUTAGENESIS OF 78-ASP--TYR-81 AND ASN-160</scope>
</reference>
<reference key="16">
    <citation type="journal article" date="2006" name="J. Mol. Biol.">
        <title>Luman, a new partner of HIV-1 TMgp41, interferes with Tat-mediated transcription of the HIV-1 LTR.</title>
        <authorList>
            <person name="Blot G."/>
            <person name="Lopez-Verges S."/>
            <person name="Treand C."/>
            <person name="Kubat N.J."/>
            <person name="Delcroix-Genete D."/>
            <person name="Emiliani S."/>
            <person name="Benarous R."/>
            <person name="Berlioz-Torrent C."/>
        </authorList>
    </citation>
    <scope>FUNCTION IN HIV-1 INFECTIVITY (MICROBIAL INFECTION)</scope>
    <scope>INTERACTION WITH HIV-1 TAT (MICROBIAL INFECTION)</scope>
    <scope>INTERACTION WITH HIV-1 TMGP41 (MICROBIAL INFECTION)</scope>
    <scope>PROTEOLYTIC PROCESSING</scope>
</reference>
<reference key="17">
    <citation type="journal article" date="2006" name="Mol. Cell. Biol.">
        <title>Luman/CREB3 induces transcription of the endoplasmic reticulum (ER) stress response protein Herp through an ER stress response element.</title>
        <authorList>
            <person name="Liang G."/>
            <person name="Audas T.E."/>
            <person name="Li Y."/>
            <person name="Cockram G.P."/>
            <person name="Dean J.D."/>
            <person name="Martyn A.C."/>
            <person name="Kokame K."/>
            <person name="Lu R."/>
        </authorList>
    </citation>
    <scope>FUNCTION IN THE UNFOLDED PROTEIN RESPONSE</scope>
    <scope>DNA-BINDING</scope>
    <scope>GLYCOSYLATION</scope>
    <scope>PROTEOLYTIC PROCESSING</scope>
    <scope>INDUCTION</scope>
</reference>
<reference key="18">
    <citation type="journal article" date="2007" name="J. Biol. Chem.">
        <title>Regulation of human LZIP expression by NF-kappaB and its involvement in monocyte cell migration induced by Lkn-1.</title>
        <authorList>
            <person name="Jang S.W."/>
            <person name="Kim Y.S."/>
            <person name="Kim Y.R."/>
            <person name="Sung H.J."/>
            <person name="Ko J."/>
        </authorList>
    </citation>
    <scope>FUNCTION IN LKN-1-STIMULATED CHEMOTAXIS SIGNALING</scope>
    <scope>INDUCTION</scope>
</reference>
<reference key="19">
    <citation type="journal article" date="2008" name="Exp. Mol. Med.">
        <title>Human LZIP induces monocyte CC chemokine receptor 2 expression leading to enhancement of monocyte chemoattractant protein 1/CCL2-induced cell migration.</title>
        <authorList>
            <person name="Sung H.J."/>
            <person name="Kim Y.S."/>
            <person name="Kang H."/>
            <person name="Ko J."/>
        </authorList>
    </citation>
    <scope>FUNCTION IN TRANSCRIPTIONAL ACTIVATION AND IN PROMOTING CHEMOTAXIS</scope>
    <scope>DNA-BINDING</scope>
</reference>
<reference key="20">
    <citation type="journal article" date="2008" name="Mol. Cell. Biol.">
        <title>A novel protein, Luman/CREB3 recruitment factor, inhibits Luman activation of the unfolded protein response.</title>
        <authorList>
            <person name="Audas T.E."/>
            <person name="Li Y."/>
            <person name="Liang G."/>
            <person name="Lu R."/>
        </authorList>
    </citation>
    <scope>INTERACTION WITH CREBRF</scope>
    <scope>PROTEOLYTIC PROCESSING</scope>
    <scope>INDUCTION</scope>
    <scope>SUBCELLULAR LOCATION</scope>
</reference>
<reference key="21">
    <citation type="journal article" date="2010" name="Mol. Immunol.">
        <title>DC-STAMP interacts with ER-resident transcription factor LUMAN which becomes activated during DC maturation.</title>
        <authorList>
            <person name="Eleveld-Trancikova D."/>
            <person name="Sanecka A."/>
            <person name="van Hout-Kuijer M.A."/>
            <person name="Looman M.W."/>
            <person name="Hendriks I.A."/>
            <person name="Jansen B.J."/>
            <person name="Adema G.J."/>
        </authorList>
    </citation>
    <scope>INTERACTION WITH DCSTAMP AND OS9</scope>
    <scope>PROTEOLYTIC PROCESSING</scope>
    <scope>INDUCTION</scope>
    <scope>SUBCELLULAR LOCATION</scope>
    <scope>TISSUE SPECIFICITY</scope>
</reference>
<dbReference type="EMBL" id="AF009368">
    <property type="protein sequence ID" value="AAB69652.1"/>
    <property type="molecule type" value="mRNA"/>
</dbReference>
<dbReference type="EMBL" id="AF029674">
    <property type="protein sequence ID" value="AAB84166.1"/>
    <property type="molecule type" value="mRNA"/>
</dbReference>
<dbReference type="EMBL" id="U59629">
    <property type="protein sequence ID" value="AAD09210.1"/>
    <property type="molecule type" value="Genomic_DNA"/>
</dbReference>
<dbReference type="EMBL" id="FJ263669">
    <property type="protein sequence ID" value="ACN32251.1"/>
    <property type="molecule type" value="mRNA"/>
</dbReference>
<dbReference type="EMBL" id="U88528">
    <property type="protein sequence ID" value="AAC04325.1"/>
    <property type="status" value="ALT_SEQ"/>
    <property type="molecule type" value="mRNA"/>
</dbReference>
<dbReference type="EMBL" id="AF211847">
    <property type="protein sequence ID" value="AAG43527.1"/>
    <property type="molecule type" value="Genomic_DNA"/>
</dbReference>
<dbReference type="EMBL" id="AF211848">
    <property type="protein sequence ID" value="AAG43528.1"/>
    <property type="molecule type" value="mRNA"/>
</dbReference>
<dbReference type="EMBL" id="AL133410">
    <property type="status" value="NOT_ANNOTATED_CDS"/>
    <property type="molecule type" value="Genomic_DNA"/>
</dbReference>
<dbReference type="EMBL" id="BC009402">
    <property type="protein sequence ID" value="AAH09402.1"/>
    <property type="molecule type" value="mRNA"/>
</dbReference>
<dbReference type="EMBL" id="BC010158">
    <property type="protein sequence ID" value="AAH10158.1"/>
    <property type="molecule type" value="mRNA"/>
</dbReference>
<dbReference type="CCDS" id="CCDS6588.1">
    <molecule id="O43889-2"/>
</dbReference>
<dbReference type="RefSeq" id="NP_006359.3">
    <molecule id="O43889-2"/>
    <property type="nucleotide sequence ID" value="NM_006368.4"/>
</dbReference>
<dbReference type="SMR" id="O43889"/>
<dbReference type="BioGRID" id="115751">
    <property type="interactions" value="245"/>
</dbReference>
<dbReference type="ComplexPortal" id="CPX-6541">
    <property type="entry name" value="bZIP transcription factor complex, ATF4-CREB3"/>
</dbReference>
<dbReference type="ComplexPortal" id="CPX-7109">
    <property type="entry name" value="bZIP transcription factor complex, BATF3-CREB3"/>
</dbReference>
<dbReference type="DIP" id="DIP-33935N"/>
<dbReference type="ELM" id="O43889"/>
<dbReference type="FunCoup" id="O43889">
    <property type="interactions" value="2262"/>
</dbReference>
<dbReference type="IntAct" id="O43889">
    <property type="interactions" value="247"/>
</dbReference>
<dbReference type="MINT" id="O43889"/>
<dbReference type="STRING" id="9606.ENSP00000342136"/>
<dbReference type="GlyCosmos" id="O43889">
    <property type="glycosylation" value="2 sites, No reported glycans"/>
</dbReference>
<dbReference type="GlyGen" id="O43889">
    <property type="glycosylation" value="3 sites, 1 N-linked glycan (1 site), 1 O-linked glycan (1 site)"/>
</dbReference>
<dbReference type="iPTMnet" id="O43889"/>
<dbReference type="PhosphoSitePlus" id="O43889"/>
<dbReference type="BioMuta" id="CREB3"/>
<dbReference type="jPOST" id="O43889"/>
<dbReference type="MassIVE" id="O43889"/>
<dbReference type="PaxDb" id="9606-ENSP00000342136"/>
<dbReference type="PeptideAtlas" id="O43889"/>
<dbReference type="ProteomicsDB" id="49217">
    <molecule id="O43889-2"/>
</dbReference>
<dbReference type="ProteomicsDB" id="49218">
    <molecule id="O43889-3"/>
</dbReference>
<dbReference type="Antibodypedia" id="26018">
    <property type="antibodies" value="258 antibodies from 30 providers"/>
</dbReference>
<dbReference type="DNASU" id="10488"/>
<dbReference type="Ensembl" id="ENST00000353704.3">
    <molecule id="O43889-2"/>
    <property type="protein sequence ID" value="ENSP00000342136.2"/>
    <property type="gene ID" value="ENSG00000107175.12"/>
</dbReference>
<dbReference type="GeneID" id="10488"/>
<dbReference type="KEGG" id="hsa:10488"/>
<dbReference type="MANE-Select" id="ENST00000353704.3">
    <property type="protein sequence ID" value="ENSP00000342136.2"/>
    <property type="RefSeq nucleotide sequence ID" value="NM_006368.5"/>
    <property type="RefSeq protein sequence ID" value="NP_006359.3"/>
</dbReference>
<dbReference type="UCSC" id="uc003zxv.4">
    <molecule id="O43889-2"/>
    <property type="organism name" value="human"/>
</dbReference>
<dbReference type="AGR" id="HGNC:2347"/>
<dbReference type="CTD" id="10488"/>
<dbReference type="DisGeNET" id="10488"/>
<dbReference type="GeneCards" id="CREB3"/>
<dbReference type="HGNC" id="HGNC:2347">
    <property type="gene designation" value="CREB3"/>
</dbReference>
<dbReference type="HPA" id="ENSG00000107175">
    <property type="expression patterns" value="Low tissue specificity"/>
</dbReference>
<dbReference type="MIM" id="606443">
    <property type="type" value="gene"/>
</dbReference>
<dbReference type="neXtProt" id="NX_O43889"/>
<dbReference type="OpenTargets" id="ENSG00000107175"/>
<dbReference type="PharmGKB" id="PA26865"/>
<dbReference type="VEuPathDB" id="HostDB:ENSG00000107175"/>
<dbReference type="eggNOG" id="KOG0709">
    <property type="taxonomic scope" value="Eukaryota"/>
</dbReference>
<dbReference type="GeneTree" id="ENSGT00940000160343"/>
<dbReference type="HOGENOM" id="CLU_047257_0_0_1"/>
<dbReference type="InParanoid" id="O43889"/>
<dbReference type="OMA" id="CLLYHMP"/>
<dbReference type="OrthoDB" id="674948at2759"/>
<dbReference type="PAN-GO" id="O43889">
    <property type="GO annotations" value="4 GO annotations based on evolutionary models"/>
</dbReference>
<dbReference type="PhylomeDB" id="O43889"/>
<dbReference type="TreeFam" id="TF316079"/>
<dbReference type="PathwayCommons" id="O43889"/>
<dbReference type="Reactome" id="R-HSA-8874211">
    <property type="pathway name" value="CREB3 factors activate genes"/>
</dbReference>
<dbReference type="SignaLink" id="O43889"/>
<dbReference type="SIGNOR" id="O43889"/>
<dbReference type="BioGRID-ORCS" id="10488">
    <property type="hits" value="19 hits in 1180 CRISPR screens"/>
</dbReference>
<dbReference type="ChiTaRS" id="CREB3">
    <property type="organism name" value="human"/>
</dbReference>
<dbReference type="GeneWiki" id="CREB3"/>
<dbReference type="GenomeRNAi" id="10488"/>
<dbReference type="Pharos" id="O43889">
    <property type="development level" value="Tbio"/>
</dbReference>
<dbReference type="PRO" id="PR:O43889"/>
<dbReference type="Proteomes" id="UP000005640">
    <property type="component" value="Chromosome 9"/>
</dbReference>
<dbReference type="RNAct" id="O43889">
    <property type="molecule type" value="protein"/>
</dbReference>
<dbReference type="Bgee" id="ENSG00000107175">
    <property type="expression patterns" value="Expressed in adenohypophysis and 190 other cell types or tissues"/>
</dbReference>
<dbReference type="GO" id="GO:0000785">
    <property type="term" value="C:chromatin"/>
    <property type="evidence" value="ECO:0000247"/>
    <property type="project" value="NTNU_SB"/>
</dbReference>
<dbReference type="GO" id="GO:0005737">
    <property type="term" value="C:cytoplasm"/>
    <property type="evidence" value="ECO:0000314"/>
    <property type="project" value="UniProtKB"/>
</dbReference>
<dbReference type="GO" id="GO:0005829">
    <property type="term" value="C:cytosol"/>
    <property type="evidence" value="ECO:0000315"/>
    <property type="project" value="UniProtKB"/>
</dbReference>
<dbReference type="GO" id="GO:0005783">
    <property type="term" value="C:endoplasmic reticulum"/>
    <property type="evidence" value="ECO:0000314"/>
    <property type="project" value="ParkinsonsUK-UCL"/>
</dbReference>
<dbReference type="GO" id="GO:0005789">
    <property type="term" value="C:endoplasmic reticulum membrane"/>
    <property type="evidence" value="ECO:0000314"/>
    <property type="project" value="UniProtKB"/>
</dbReference>
<dbReference type="GO" id="GO:0005794">
    <property type="term" value="C:Golgi apparatus"/>
    <property type="evidence" value="ECO:0000315"/>
    <property type="project" value="UniProtKB"/>
</dbReference>
<dbReference type="GO" id="GO:0000139">
    <property type="term" value="C:Golgi membrane"/>
    <property type="evidence" value="ECO:0000314"/>
    <property type="project" value="UniProtKB"/>
</dbReference>
<dbReference type="GO" id="GO:0016020">
    <property type="term" value="C:membrane"/>
    <property type="evidence" value="ECO:0000314"/>
    <property type="project" value="UniProtKB"/>
</dbReference>
<dbReference type="GO" id="GO:0043025">
    <property type="term" value="C:neuronal cell body"/>
    <property type="evidence" value="ECO:0000314"/>
    <property type="project" value="UniProtKB"/>
</dbReference>
<dbReference type="GO" id="GO:0016604">
    <property type="term" value="C:nuclear body"/>
    <property type="evidence" value="ECO:0000314"/>
    <property type="project" value="UniProtKB"/>
</dbReference>
<dbReference type="GO" id="GO:0005654">
    <property type="term" value="C:nucleoplasm"/>
    <property type="evidence" value="ECO:0000304"/>
    <property type="project" value="Reactome"/>
</dbReference>
<dbReference type="GO" id="GO:0005634">
    <property type="term" value="C:nucleus"/>
    <property type="evidence" value="ECO:0000314"/>
    <property type="project" value="UniProtKB"/>
</dbReference>
<dbReference type="GO" id="GO:0090575">
    <property type="term" value="C:RNA polymerase II transcription regulator complex"/>
    <property type="evidence" value="ECO:0000353"/>
    <property type="project" value="ComplexPortal"/>
</dbReference>
<dbReference type="GO" id="GO:0008140">
    <property type="term" value="F:cAMP response element binding protein binding"/>
    <property type="evidence" value="ECO:0000314"/>
    <property type="project" value="UniProtKB"/>
</dbReference>
<dbReference type="GO" id="GO:0031726">
    <property type="term" value="F:CCR1 chemokine receptor binding"/>
    <property type="evidence" value="ECO:0000314"/>
    <property type="project" value="UniProtKB"/>
</dbReference>
<dbReference type="GO" id="GO:0003682">
    <property type="term" value="F:chromatin binding"/>
    <property type="evidence" value="ECO:0000314"/>
    <property type="project" value="UniProtKB"/>
</dbReference>
<dbReference type="GO" id="GO:0003677">
    <property type="term" value="F:DNA binding"/>
    <property type="evidence" value="ECO:0000314"/>
    <property type="project" value="UniProtKB"/>
</dbReference>
<dbReference type="GO" id="GO:0001228">
    <property type="term" value="F:DNA-binding transcription activator activity, RNA polymerase II-specific"/>
    <property type="evidence" value="ECO:0000314"/>
    <property type="project" value="ParkinsonsUK-UCL"/>
</dbReference>
<dbReference type="GO" id="GO:0003700">
    <property type="term" value="F:DNA-binding transcription factor activity"/>
    <property type="evidence" value="ECO:0000314"/>
    <property type="project" value="UniProtKB"/>
</dbReference>
<dbReference type="GO" id="GO:0000981">
    <property type="term" value="F:DNA-binding transcription factor activity, RNA polymerase II-specific"/>
    <property type="evidence" value="ECO:0000314"/>
    <property type="project" value="NTNU_SB"/>
</dbReference>
<dbReference type="GO" id="GO:0042802">
    <property type="term" value="F:identical protein binding"/>
    <property type="evidence" value="ECO:0000353"/>
    <property type="project" value="IntAct"/>
</dbReference>
<dbReference type="GO" id="GO:0046983">
    <property type="term" value="F:protein dimerization activity"/>
    <property type="evidence" value="ECO:0000304"/>
    <property type="project" value="UniProtKB"/>
</dbReference>
<dbReference type="GO" id="GO:0042803">
    <property type="term" value="F:protein homodimerization activity"/>
    <property type="evidence" value="ECO:0000314"/>
    <property type="project" value="UniProtKB"/>
</dbReference>
<dbReference type="GO" id="GO:0000978">
    <property type="term" value="F:RNA polymerase II cis-regulatory region sequence-specific DNA binding"/>
    <property type="evidence" value="ECO:0000314"/>
    <property type="project" value="NTNU_SB"/>
</dbReference>
<dbReference type="GO" id="GO:0000977">
    <property type="term" value="F:RNA polymerase II transcription regulatory region sequence-specific DNA binding"/>
    <property type="evidence" value="ECO:0000314"/>
    <property type="project" value="UniProtKB"/>
</dbReference>
<dbReference type="GO" id="GO:1990837">
    <property type="term" value="F:sequence-specific double-stranded DNA binding"/>
    <property type="evidence" value="ECO:0000314"/>
    <property type="project" value="ARUK-UCL"/>
</dbReference>
<dbReference type="GO" id="GO:0001221">
    <property type="term" value="F:transcription coregulator binding"/>
    <property type="evidence" value="ECO:0000353"/>
    <property type="project" value="UniProtKB"/>
</dbReference>
<dbReference type="GO" id="GO:0006935">
    <property type="term" value="P:chemotaxis"/>
    <property type="evidence" value="ECO:0007669"/>
    <property type="project" value="UniProtKB-KW"/>
</dbReference>
<dbReference type="GO" id="GO:0006351">
    <property type="term" value="P:DNA-templated transcription"/>
    <property type="evidence" value="ECO:0000314"/>
    <property type="project" value="UniProtKB"/>
</dbReference>
<dbReference type="GO" id="GO:0030968">
    <property type="term" value="P:endoplasmic reticulum unfolded protein response"/>
    <property type="evidence" value="ECO:0000314"/>
    <property type="project" value="ParkinsonsUK-UCL"/>
</dbReference>
<dbReference type="GO" id="GO:0019043">
    <property type="term" value="P:establishment of viral latency"/>
    <property type="evidence" value="ECO:0000314"/>
    <property type="project" value="UniProtKB"/>
</dbReference>
<dbReference type="GO" id="GO:0050930">
    <property type="term" value="P:induction of positive chemotaxis"/>
    <property type="evidence" value="ECO:0000314"/>
    <property type="project" value="UniProtKB"/>
</dbReference>
<dbReference type="GO" id="GO:0140467">
    <property type="term" value="P:integrated stress response signaling"/>
    <property type="evidence" value="ECO:0000303"/>
    <property type="project" value="ComplexPortal"/>
</dbReference>
<dbReference type="GO" id="GO:0045786">
    <property type="term" value="P:negative regulation of cell cycle"/>
    <property type="evidence" value="ECO:0000303"/>
    <property type="project" value="UniProtKB"/>
</dbReference>
<dbReference type="GO" id="GO:1902236">
    <property type="term" value="P:negative regulation of endoplasmic reticulum stress-induced intrinsic apoptotic signaling pathway"/>
    <property type="evidence" value="ECO:0000314"/>
    <property type="project" value="ParkinsonsUK-UCL"/>
</dbReference>
<dbReference type="GO" id="GO:0051928">
    <property type="term" value="P:positive regulation of calcium ion transport"/>
    <property type="evidence" value="ECO:0000315"/>
    <property type="project" value="UniProtKB"/>
</dbReference>
<dbReference type="GO" id="GO:0030335">
    <property type="term" value="P:positive regulation of cell migration"/>
    <property type="evidence" value="ECO:0000315"/>
    <property type="project" value="UniProtKB"/>
</dbReference>
<dbReference type="GO" id="GO:0090045">
    <property type="term" value="P:positive regulation of deacetylase activity"/>
    <property type="evidence" value="ECO:0000314"/>
    <property type="project" value="UniProtKB"/>
</dbReference>
<dbReference type="GO" id="GO:0002230">
    <property type="term" value="P:positive regulation of defense response to virus by host"/>
    <property type="evidence" value="ECO:0000314"/>
    <property type="project" value="UniProtKB"/>
</dbReference>
<dbReference type="GO" id="GO:0045893">
    <property type="term" value="P:positive regulation of DNA-templated transcription"/>
    <property type="evidence" value="ECO:0000314"/>
    <property type="project" value="UniProtKB"/>
</dbReference>
<dbReference type="GO" id="GO:0090026">
    <property type="term" value="P:positive regulation of monocyte chemotaxis"/>
    <property type="evidence" value="ECO:0000314"/>
    <property type="project" value="UniProtKB"/>
</dbReference>
<dbReference type="GO" id="GO:0045944">
    <property type="term" value="P:positive regulation of transcription by RNA polymerase II"/>
    <property type="evidence" value="ECO:0000314"/>
    <property type="project" value="UniProtKB"/>
</dbReference>
<dbReference type="GO" id="GO:0042981">
    <property type="term" value="P:regulation of apoptotic process"/>
    <property type="evidence" value="ECO:0000314"/>
    <property type="project" value="UniProtKB"/>
</dbReference>
<dbReference type="GO" id="GO:0001558">
    <property type="term" value="P:regulation of cell growth"/>
    <property type="evidence" value="ECO:0000314"/>
    <property type="project" value="UniProtKB"/>
</dbReference>
<dbReference type="GO" id="GO:0042127">
    <property type="term" value="P:regulation of cell population proliferation"/>
    <property type="evidence" value="ECO:0000315"/>
    <property type="project" value="UniProtKB"/>
</dbReference>
<dbReference type="GO" id="GO:0006357">
    <property type="term" value="P:regulation of transcription by RNA polymerase II"/>
    <property type="evidence" value="ECO:0000318"/>
    <property type="project" value="GO_Central"/>
</dbReference>
<dbReference type="GO" id="GO:0019046">
    <property type="term" value="P:release from viral latency"/>
    <property type="evidence" value="ECO:0000314"/>
    <property type="project" value="UniProtKB"/>
</dbReference>
<dbReference type="CDD" id="cd14689">
    <property type="entry name" value="bZIP_CREB3"/>
    <property type="match status" value="1"/>
</dbReference>
<dbReference type="FunFam" id="1.20.5.170:FF:000042">
    <property type="entry name" value="Cyclic AMP-responsive element-binding protein 3-like protein 3"/>
    <property type="match status" value="1"/>
</dbReference>
<dbReference type="Gene3D" id="1.20.5.170">
    <property type="match status" value="1"/>
</dbReference>
<dbReference type="InterPro" id="IPR004827">
    <property type="entry name" value="bZIP"/>
</dbReference>
<dbReference type="InterPro" id="IPR046347">
    <property type="entry name" value="bZIP_sf"/>
</dbReference>
<dbReference type="InterPro" id="IPR051381">
    <property type="entry name" value="CREB_ATF_subfamily"/>
</dbReference>
<dbReference type="PANTHER" id="PTHR45996">
    <property type="entry name" value="AGAP001464-PB"/>
    <property type="match status" value="1"/>
</dbReference>
<dbReference type="PANTHER" id="PTHR45996:SF4">
    <property type="entry name" value="CYCLIC AMP-RESPONSIVE ELEMENT-BINDING PROTEIN 3"/>
    <property type="match status" value="1"/>
</dbReference>
<dbReference type="Pfam" id="PF00170">
    <property type="entry name" value="bZIP_1"/>
    <property type="match status" value="1"/>
</dbReference>
<dbReference type="SMART" id="SM00338">
    <property type="entry name" value="BRLZ"/>
    <property type="match status" value="1"/>
</dbReference>
<dbReference type="SUPFAM" id="SSF57959">
    <property type="entry name" value="Leucine zipper domain"/>
    <property type="match status" value="1"/>
</dbReference>
<dbReference type="PROSITE" id="PS50217">
    <property type="entry name" value="BZIP"/>
    <property type="match status" value="1"/>
</dbReference>
<dbReference type="PROSITE" id="PS00036">
    <property type="entry name" value="BZIP_BASIC"/>
    <property type="match status" value="1"/>
</dbReference>